<evidence type="ECO:0000255" key="1">
    <source>
        <dbReference type="HAMAP-Rule" id="MF_01629"/>
    </source>
</evidence>
<proteinExistence type="inferred from homology"/>
<dbReference type="EC" id="1.4.3.5" evidence="1"/>
<dbReference type="EMBL" id="CR954246">
    <property type="protein sequence ID" value="CAI85742.1"/>
    <property type="molecule type" value="Genomic_DNA"/>
</dbReference>
<dbReference type="SMR" id="Q3IDP4"/>
<dbReference type="STRING" id="326442.PSHAa0658"/>
<dbReference type="KEGG" id="pha:PSHAa0658"/>
<dbReference type="PATRIC" id="fig|326442.8.peg.621"/>
<dbReference type="eggNOG" id="COG0259">
    <property type="taxonomic scope" value="Bacteria"/>
</dbReference>
<dbReference type="HOGENOM" id="CLU_032263_2_2_6"/>
<dbReference type="BioCyc" id="PHAL326442:PSHA_RS03215-MONOMER"/>
<dbReference type="UniPathway" id="UPA01068">
    <property type="reaction ID" value="UER00304"/>
</dbReference>
<dbReference type="UniPathway" id="UPA01068">
    <property type="reaction ID" value="UER00305"/>
</dbReference>
<dbReference type="Proteomes" id="UP000006843">
    <property type="component" value="Chromosome I"/>
</dbReference>
<dbReference type="GO" id="GO:0010181">
    <property type="term" value="F:FMN binding"/>
    <property type="evidence" value="ECO:0007669"/>
    <property type="project" value="UniProtKB-UniRule"/>
</dbReference>
<dbReference type="GO" id="GO:0004733">
    <property type="term" value="F:pyridoxamine phosphate oxidase activity"/>
    <property type="evidence" value="ECO:0007669"/>
    <property type="project" value="UniProtKB-UniRule"/>
</dbReference>
<dbReference type="GO" id="GO:0008615">
    <property type="term" value="P:pyridoxine biosynthetic process"/>
    <property type="evidence" value="ECO:0007669"/>
    <property type="project" value="UniProtKB-KW"/>
</dbReference>
<dbReference type="Gene3D" id="2.30.110.10">
    <property type="entry name" value="Electron Transport, Fmn-binding Protein, Chain A"/>
    <property type="match status" value="1"/>
</dbReference>
<dbReference type="HAMAP" id="MF_01629">
    <property type="entry name" value="PdxH"/>
    <property type="match status" value="1"/>
</dbReference>
<dbReference type="InterPro" id="IPR000659">
    <property type="entry name" value="Pyridox_Oxase"/>
</dbReference>
<dbReference type="InterPro" id="IPR019740">
    <property type="entry name" value="Pyridox_Oxase_CS"/>
</dbReference>
<dbReference type="InterPro" id="IPR011576">
    <property type="entry name" value="Pyridox_Oxase_N"/>
</dbReference>
<dbReference type="InterPro" id="IPR019576">
    <property type="entry name" value="Pyridoxamine_oxidase_dimer_C"/>
</dbReference>
<dbReference type="InterPro" id="IPR012349">
    <property type="entry name" value="Split_barrel_FMN-bd"/>
</dbReference>
<dbReference type="NCBIfam" id="TIGR00558">
    <property type="entry name" value="pdxH"/>
    <property type="match status" value="1"/>
</dbReference>
<dbReference type="NCBIfam" id="NF004231">
    <property type="entry name" value="PRK05679.1"/>
    <property type="match status" value="1"/>
</dbReference>
<dbReference type="PANTHER" id="PTHR10851:SF0">
    <property type="entry name" value="PYRIDOXINE-5'-PHOSPHATE OXIDASE"/>
    <property type="match status" value="1"/>
</dbReference>
<dbReference type="PANTHER" id="PTHR10851">
    <property type="entry name" value="PYRIDOXINE-5-PHOSPHATE OXIDASE"/>
    <property type="match status" value="1"/>
</dbReference>
<dbReference type="Pfam" id="PF10590">
    <property type="entry name" value="PNP_phzG_C"/>
    <property type="match status" value="1"/>
</dbReference>
<dbReference type="Pfam" id="PF01243">
    <property type="entry name" value="PNPOx_N"/>
    <property type="match status" value="1"/>
</dbReference>
<dbReference type="PIRSF" id="PIRSF000190">
    <property type="entry name" value="Pyd_amn-ph_oxd"/>
    <property type="match status" value="1"/>
</dbReference>
<dbReference type="SUPFAM" id="SSF50475">
    <property type="entry name" value="FMN-binding split barrel"/>
    <property type="match status" value="1"/>
</dbReference>
<dbReference type="PROSITE" id="PS01064">
    <property type="entry name" value="PYRIDOX_OXIDASE"/>
    <property type="match status" value="1"/>
</dbReference>
<accession>Q3IDP4</accession>
<name>PDXH_PSET1</name>
<feature type="chain" id="PRO_0000167735" description="Pyridoxine/pyridoxamine 5'-phosphate oxidase">
    <location>
        <begin position="1"/>
        <end position="212"/>
    </location>
</feature>
<feature type="binding site" evidence="1">
    <location>
        <begin position="7"/>
        <end position="10"/>
    </location>
    <ligand>
        <name>substrate</name>
    </ligand>
</feature>
<feature type="binding site" evidence="1">
    <location>
        <begin position="60"/>
        <end position="65"/>
    </location>
    <ligand>
        <name>FMN</name>
        <dbReference type="ChEBI" id="CHEBI:58210"/>
    </ligand>
</feature>
<feature type="binding site" evidence="1">
    <location>
        <position position="65"/>
    </location>
    <ligand>
        <name>substrate</name>
    </ligand>
</feature>
<feature type="binding site" evidence="1">
    <location>
        <begin position="75"/>
        <end position="76"/>
    </location>
    <ligand>
        <name>FMN</name>
        <dbReference type="ChEBI" id="CHEBI:58210"/>
    </ligand>
</feature>
<feature type="binding site" evidence="1">
    <location>
        <position position="81"/>
    </location>
    <ligand>
        <name>FMN</name>
        <dbReference type="ChEBI" id="CHEBI:58210"/>
    </ligand>
</feature>
<feature type="binding site" evidence="1">
    <location>
        <position position="82"/>
    </location>
    <ligand>
        <name>FMN</name>
        <dbReference type="ChEBI" id="CHEBI:58210"/>
    </ligand>
</feature>
<feature type="binding site" evidence="1">
    <location>
        <position position="104"/>
    </location>
    <ligand>
        <name>FMN</name>
        <dbReference type="ChEBI" id="CHEBI:58210"/>
    </ligand>
</feature>
<feature type="binding site" evidence="1">
    <location>
        <position position="122"/>
    </location>
    <ligand>
        <name>substrate</name>
    </ligand>
</feature>
<feature type="binding site" evidence="1">
    <location>
        <position position="126"/>
    </location>
    <ligand>
        <name>substrate</name>
    </ligand>
</feature>
<feature type="binding site" evidence="1">
    <location>
        <position position="130"/>
    </location>
    <ligand>
        <name>substrate</name>
    </ligand>
</feature>
<feature type="binding site" evidence="1">
    <location>
        <begin position="139"/>
        <end position="140"/>
    </location>
    <ligand>
        <name>FMN</name>
        <dbReference type="ChEBI" id="CHEBI:58210"/>
    </ligand>
</feature>
<feature type="binding site" evidence="1">
    <location>
        <position position="184"/>
    </location>
    <ligand>
        <name>FMN</name>
        <dbReference type="ChEBI" id="CHEBI:58210"/>
    </ligand>
</feature>
<feature type="binding site" evidence="1">
    <location>
        <begin position="190"/>
        <end position="192"/>
    </location>
    <ligand>
        <name>substrate</name>
    </ligand>
</feature>
<feature type="binding site" evidence="1">
    <location>
        <position position="194"/>
    </location>
    <ligand>
        <name>FMN</name>
        <dbReference type="ChEBI" id="CHEBI:58210"/>
    </ligand>
</feature>
<protein>
    <recommendedName>
        <fullName evidence="1">Pyridoxine/pyridoxamine 5'-phosphate oxidase</fullName>
        <ecNumber evidence="1">1.4.3.5</ecNumber>
    </recommendedName>
    <alternativeName>
        <fullName evidence="1">PNP/PMP oxidase</fullName>
        <shortName evidence="1">PNPOx</shortName>
    </alternativeName>
    <alternativeName>
        <fullName evidence="1">Pyridoxal 5'-phosphate synthase</fullName>
    </alternativeName>
</protein>
<comment type="function">
    <text evidence="1">Catalyzes the oxidation of either pyridoxine 5'-phosphate (PNP) or pyridoxamine 5'-phosphate (PMP) into pyridoxal 5'-phosphate (PLP).</text>
</comment>
<comment type="catalytic activity">
    <reaction evidence="1">
        <text>pyridoxamine 5'-phosphate + O2 + H2O = pyridoxal 5'-phosphate + H2O2 + NH4(+)</text>
        <dbReference type="Rhea" id="RHEA:15817"/>
        <dbReference type="ChEBI" id="CHEBI:15377"/>
        <dbReference type="ChEBI" id="CHEBI:15379"/>
        <dbReference type="ChEBI" id="CHEBI:16240"/>
        <dbReference type="ChEBI" id="CHEBI:28938"/>
        <dbReference type="ChEBI" id="CHEBI:58451"/>
        <dbReference type="ChEBI" id="CHEBI:597326"/>
        <dbReference type="EC" id="1.4.3.5"/>
    </reaction>
</comment>
<comment type="catalytic activity">
    <reaction evidence="1">
        <text>pyridoxine 5'-phosphate + O2 = pyridoxal 5'-phosphate + H2O2</text>
        <dbReference type="Rhea" id="RHEA:15149"/>
        <dbReference type="ChEBI" id="CHEBI:15379"/>
        <dbReference type="ChEBI" id="CHEBI:16240"/>
        <dbReference type="ChEBI" id="CHEBI:58589"/>
        <dbReference type="ChEBI" id="CHEBI:597326"/>
        <dbReference type="EC" id="1.4.3.5"/>
    </reaction>
</comment>
<comment type="cofactor">
    <cofactor evidence="1">
        <name>FMN</name>
        <dbReference type="ChEBI" id="CHEBI:58210"/>
    </cofactor>
    <text evidence="1">Binds 1 FMN per subunit.</text>
</comment>
<comment type="pathway">
    <text evidence="1">Cofactor metabolism; pyridoxal 5'-phosphate salvage; pyridoxal 5'-phosphate from pyridoxamine 5'-phosphate: step 1/1.</text>
</comment>
<comment type="pathway">
    <text evidence="1">Cofactor metabolism; pyridoxal 5'-phosphate salvage; pyridoxal 5'-phosphate from pyridoxine 5'-phosphate: step 1/1.</text>
</comment>
<comment type="subunit">
    <text evidence="1">Homodimer.</text>
</comment>
<comment type="similarity">
    <text evidence="1">Belongs to the pyridoxamine 5'-phosphate oxidase family.</text>
</comment>
<keyword id="KW-0285">Flavoprotein</keyword>
<keyword id="KW-0288">FMN</keyword>
<keyword id="KW-0560">Oxidoreductase</keyword>
<keyword id="KW-0664">Pyridoxine biosynthesis</keyword>
<keyword id="KW-1185">Reference proteome</keyword>
<gene>
    <name evidence="1" type="primary">pdxH</name>
    <name type="ordered locus">PSHAa0658</name>
</gene>
<organism>
    <name type="scientific">Pseudoalteromonas translucida (strain TAC 125)</name>
    <dbReference type="NCBI Taxonomy" id="326442"/>
    <lineage>
        <taxon>Bacteria</taxon>
        <taxon>Pseudomonadati</taxon>
        <taxon>Pseudomonadota</taxon>
        <taxon>Gammaproteobacteria</taxon>
        <taxon>Alteromonadales</taxon>
        <taxon>Pseudoalteromonadaceae</taxon>
        <taxon>Pseudoalteromonas</taxon>
    </lineage>
</organism>
<reference key="1">
    <citation type="journal article" date="2005" name="Genome Res.">
        <title>Coping with cold: the genome of the versatile marine Antarctica bacterium Pseudoalteromonas haloplanktis TAC125.</title>
        <authorList>
            <person name="Medigue C."/>
            <person name="Krin E."/>
            <person name="Pascal G."/>
            <person name="Barbe V."/>
            <person name="Bernsel A."/>
            <person name="Bertin P.N."/>
            <person name="Cheung F."/>
            <person name="Cruveiller S."/>
            <person name="D'Amico S."/>
            <person name="Duilio A."/>
            <person name="Fang G."/>
            <person name="Feller G."/>
            <person name="Ho C."/>
            <person name="Mangenot S."/>
            <person name="Marino G."/>
            <person name="Nilsson J."/>
            <person name="Parrilli E."/>
            <person name="Rocha E.P.C."/>
            <person name="Rouy Z."/>
            <person name="Sekowska A."/>
            <person name="Tutino M.L."/>
            <person name="Vallenet D."/>
            <person name="von Heijne G."/>
            <person name="Danchin A."/>
        </authorList>
    </citation>
    <scope>NUCLEOTIDE SEQUENCE [LARGE SCALE GENOMIC DNA]</scope>
    <source>
        <strain>TAC 125</strain>
    </source>
</reference>
<sequence length="212" mass="24362">MKLEDIRREYLQNALSEDNLLDDPFKQFETWLEHAVASNLPDPTAMVVATVDDTGQPSQRIVLLKHLDNDGFVFFTNTGSRKAQELKGNNKISLHFPWHPMERQVIVYGEAKPLPTSAVAKYFLSRPKESQLAAWASAQSRPVSSRKVLMETFANMKNKFAKGEIPLPDFWGGYCVVPQKIEFWQGGAHRLHDRFMYQRQADNSWQITRLNP</sequence>